<sequence>MERKGIFIKVFSYTIIVLLLLVGVTATLFAQQFVSYFRAMEAQQTVKSYQPLVELIQNSDRLDMQEVAGLFHYNNQSFEFYIEDKEGSVLYATPNADTSNSVRPDFLYVVHRDDNISIVAQSKAGVGLLYQGLTIRGIVMIAIMVVFSLLCAYIFARQMTTPIKALADSANKMANLKEVPPPLERKDELGALAHDMHSMYIRLKETIARLEDEIAREHELEETQRYFFAAASHELKTPIAAVSVLLEGMLENIGDYKDHSKYLRECIKMMDRQGKTISEILELVSLNDGRIVPIAEPLDIGRTVAELLPDFQTLAEANNQRFVTDIPAGQIVLSDPKLIQKALSNVILNAVQNTPQGGEVRIWSEPGAEKYRLSVLNMGVHIDDTALSKLFIPFYRIDQARSRKSGRSGLGLAIVQKTLDAMSLQYALENTSDGVLFWLDLPPTSTL</sequence>
<proteinExistence type="evidence at protein level"/>
<dbReference type="EC" id="2.7.13.3" evidence="4 8"/>
<dbReference type="EMBL" id="U35369">
    <property type="protein sequence ID" value="AAB05623.1"/>
    <property type="molecule type" value="Genomic_DNA"/>
</dbReference>
<dbReference type="EMBL" id="AE016830">
    <property type="protein sequence ID" value="AAO82025.1"/>
    <property type="molecule type" value="Genomic_DNA"/>
</dbReference>
<dbReference type="RefSeq" id="NP_815955.1">
    <property type="nucleotide sequence ID" value="NC_004668.1"/>
</dbReference>
<dbReference type="SMR" id="Q47745"/>
<dbReference type="STRING" id="226185.EF_2298"/>
<dbReference type="CARD" id="ARO:3002932">
    <property type="molecule name" value="vanS_in_vanB_cl"/>
    <property type="mechanism identifier" value="ARO:0001001"/>
    <property type="mechanism name" value="antibiotic target alteration"/>
</dbReference>
<dbReference type="EnsemblBacteria" id="AAO82025">
    <property type="protein sequence ID" value="AAO82025"/>
    <property type="gene ID" value="EF_2298"/>
</dbReference>
<dbReference type="KEGG" id="efa:EF2298"/>
<dbReference type="PATRIC" id="fig|226185.45.peg.1234"/>
<dbReference type="eggNOG" id="COG5002">
    <property type="taxonomic scope" value="Bacteria"/>
</dbReference>
<dbReference type="HOGENOM" id="CLU_000445_89_6_9"/>
<dbReference type="BRENDA" id="2.7.13.3">
    <property type="organism ID" value="2095"/>
</dbReference>
<dbReference type="Proteomes" id="UP000001415">
    <property type="component" value="Chromosome"/>
</dbReference>
<dbReference type="GO" id="GO:0005886">
    <property type="term" value="C:plasma membrane"/>
    <property type="evidence" value="ECO:0007669"/>
    <property type="project" value="UniProtKB-SubCell"/>
</dbReference>
<dbReference type="GO" id="GO:0005524">
    <property type="term" value="F:ATP binding"/>
    <property type="evidence" value="ECO:0007669"/>
    <property type="project" value="UniProtKB-KW"/>
</dbReference>
<dbReference type="GO" id="GO:0004721">
    <property type="term" value="F:phosphoprotein phosphatase activity"/>
    <property type="evidence" value="ECO:0007669"/>
    <property type="project" value="TreeGrafter"/>
</dbReference>
<dbReference type="GO" id="GO:0000155">
    <property type="term" value="F:phosphorelay sensor kinase activity"/>
    <property type="evidence" value="ECO:0007669"/>
    <property type="project" value="InterPro"/>
</dbReference>
<dbReference type="GO" id="GO:0071555">
    <property type="term" value="P:cell wall organization"/>
    <property type="evidence" value="ECO:0007669"/>
    <property type="project" value="UniProtKB-KW"/>
</dbReference>
<dbReference type="GO" id="GO:0016036">
    <property type="term" value="P:cellular response to phosphate starvation"/>
    <property type="evidence" value="ECO:0007669"/>
    <property type="project" value="TreeGrafter"/>
</dbReference>
<dbReference type="GO" id="GO:0046677">
    <property type="term" value="P:response to antibiotic"/>
    <property type="evidence" value="ECO:0007669"/>
    <property type="project" value="UniProtKB-KW"/>
</dbReference>
<dbReference type="CDD" id="cd06225">
    <property type="entry name" value="HAMP"/>
    <property type="match status" value="1"/>
</dbReference>
<dbReference type="CDD" id="cd00082">
    <property type="entry name" value="HisKA"/>
    <property type="match status" value="1"/>
</dbReference>
<dbReference type="Gene3D" id="1.10.287.130">
    <property type="match status" value="1"/>
</dbReference>
<dbReference type="Gene3D" id="6.10.340.10">
    <property type="match status" value="1"/>
</dbReference>
<dbReference type="Gene3D" id="3.30.565.10">
    <property type="entry name" value="Histidine kinase-like ATPase, C-terminal domain"/>
    <property type="match status" value="1"/>
</dbReference>
<dbReference type="InterPro" id="IPR050351">
    <property type="entry name" value="2-comp_sensor_kinase"/>
</dbReference>
<dbReference type="InterPro" id="IPR003660">
    <property type="entry name" value="HAMP_dom"/>
</dbReference>
<dbReference type="InterPro" id="IPR036890">
    <property type="entry name" value="HATPase_C_sf"/>
</dbReference>
<dbReference type="InterPro" id="IPR005467">
    <property type="entry name" value="His_kinase_dom"/>
</dbReference>
<dbReference type="InterPro" id="IPR003661">
    <property type="entry name" value="HisK_dim/P_dom"/>
</dbReference>
<dbReference type="InterPro" id="IPR036097">
    <property type="entry name" value="HisK_dim/P_sf"/>
</dbReference>
<dbReference type="NCBIfam" id="NF033090">
    <property type="entry name" value="HK_VanS_B"/>
    <property type="match status" value="1"/>
</dbReference>
<dbReference type="PANTHER" id="PTHR45453:SF3">
    <property type="entry name" value="HISTIDINE KINASE"/>
    <property type="match status" value="1"/>
</dbReference>
<dbReference type="PANTHER" id="PTHR45453">
    <property type="entry name" value="PHOSPHATE REGULON SENSOR PROTEIN PHOR"/>
    <property type="match status" value="1"/>
</dbReference>
<dbReference type="Pfam" id="PF00672">
    <property type="entry name" value="HAMP"/>
    <property type="match status" value="1"/>
</dbReference>
<dbReference type="Pfam" id="PF02518">
    <property type="entry name" value="HATPase_c"/>
    <property type="match status" value="1"/>
</dbReference>
<dbReference type="Pfam" id="PF00512">
    <property type="entry name" value="HisKA"/>
    <property type="match status" value="1"/>
</dbReference>
<dbReference type="SMART" id="SM00304">
    <property type="entry name" value="HAMP"/>
    <property type="match status" value="1"/>
</dbReference>
<dbReference type="SMART" id="SM00387">
    <property type="entry name" value="HATPase_c"/>
    <property type="match status" value="1"/>
</dbReference>
<dbReference type="SMART" id="SM00388">
    <property type="entry name" value="HisKA"/>
    <property type="match status" value="1"/>
</dbReference>
<dbReference type="SUPFAM" id="SSF55874">
    <property type="entry name" value="ATPase domain of HSP90 chaperone/DNA topoisomerase II/histidine kinase"/>
    <property type="match status" value="1"/>
</dbReference>
<dbReference type="SUPFAM" id="SSF158472">
    <property type="entry name" value="HAMP domain-like"/>
    <property type="match status" value="1"/>
</dbReference>
<dbReference type="SUPFAM" id="SSF47384">
    <property type="entry name" value="Homodimeric domain of signal transducing histidine kinase"/>
    <property type="match status" value="1"/>
</dbReference>
<dbReference type="PROSITE" id="PS50885">
    <property type="entry name" value="HAMP"/>
    <property type="match status" value="1"/>
</dbReference>
<dbReference type="PROSITE" id="PS50109">
    <property type="entry name" value="HIS_KIN"/>
    <property type="match status" value="1"/>
</dbReference>
<protein>
    <recommendedName>
        <fullName>Sensor protein VanSB</fullName>
        <ecNumber evidence="4 8">2.7.13.3</ecNumber>
    </recommendedName>
    <alternativeName>
        <fullName>Vancomycin B-type resistance protein VanSB</fullName>
    </alternativeName>
    <alternativeName>
        <fullName>Vancomycin histidine protein kinase</fullName>
    </alternativeName>
</protein>
<organism>
    <name type="scientific">Enterococcus faecalis (strain ATCC 700802 / V583)</name>
    <dbReference type="NCBI Taxonomy" id="226185"/>
    <lineage>
        <taxon>Bacteria</taxon>
        <taxon>Bacillati</taxon>
        <taxon>Bacillota</taxon>
        <taxon>Bacilli</taxon>
        <taxon>Lactobacillales</taxon>
        <taxon>Enterococcaceae</taxon>
        <taxon>Enterococcus</taxon>
    </lineage>
</organism>
<comment type="function">
    <text evidence="4 5 6">Member of the two-component regulatory system VanSB/VanRB (PubMed:10463151, PubMed:8631706, PubMed:9751771). Activates the transcription of vanSB, vanYB and vanW in response to vancomycin which results in vancomycin resistance (PubMed:8631706). VanSB may activate VanRB by phosphorylation (PubMed:10463151, PubMed:8631706). May also act as a phospho-VanRB phosphatase (PubMed:10463151, PubMed:9751771).</text>
</comment>
<comment type="catalytic activity">
    <reaction evidence="4 8">
        <text>ATP + protein L-histidine = ADP + protein N-phospho-L-histidine.</text>
        <dbReference type="EC" id="2.7.13.3"/>
    </reaction>
</comment>
<comment type="subcellular location">
    <subcellularLocation>
        <location evidence="7">Cell membrane</location>
        <topology evidence="7">Multi-pass membrane protein</topology>
    </subcellularLocation>
</comment>
<gene>
    <name type="primary">vanSB</name>
    <name type="ordered locus">EF_2298</name>
</gene>
<evidence type="ECO:0000255" key="1"/>
<evidence type="ECO:0000255" key="2">
    <source>
        <dbReference type="PROSITE-ProRule" id="PRU00102"/>
    </source>
</evidence>
<evidence type="ECO:0000255" key="3">
    <source>
        <dbReference type="PROSITE-ProRule" id="PRU00107"/>
    </source>
</evidence>
<evidence type="ECO:0000269" key="4">
    <source>
    </source>
</evidence>
<evidence type="ECO:0000269" key="5">
    <source>
    </source>
</evidence>
<evidence type="ECO:0000269" key="6">
    <source>
    </source>
</evidence>
<evidence type="ECO:0000305" key="7"/>
<evidence type="ECO:0000305" key="8">
    <source>
    </source>
</evidence>
<reference key="1">
    <citation type="journal article" date="1996" name="J. Bacteriol.">
        <title>Regulation of VanB-type vancomycin resistance gene expression by the VanS(B)-VanR(B) two-component regulatory system in Enterococcus faecalis V583.</title>
        <authorList>
            <person name="Evers S."/>
            <person name="Courvalin P."/>
        </authorList>
    </citation>
    <scope>NUCLEOTIDE SEQUENCE [GENOMIC DNA]</scope>
    <scope>FUNCTION</scope>
    <scope>CATALYTIC ACTIVITY</scope>
    <source>
        <strain>ATCC 700802 / V583</strain>
    </source>
</reference>
<reference key="2">
    <citation type="journal article" date="2003" name="Science">
        <title>Role of mobile DNA in the evolution of vancomycin-resistant Enterococcus faecalis.</title>
        <authorList>
            <person name="Paulsen I.T."/>
            <person name="Banerjei L."/>
            <person name="Myers G.S.A."/>
            <person name="Nelson K.E."/>
            <person name="Seshadri R."/>
            <person name="Read T.D."/>
            <person name="Fouts D.E."/>
            <person name="Eisen J.A."/>
            <person name="Gill S.R."/>
            <person name="Heidelberg J.F."/>
            <person name="Tettelin H."/>
            <person name="Dodson R.J."/>
            <person name="Umayam L.A."/>
            <person name="Brinkac L.M."/>
            <person name="Beanan M.J."/>
            <person name="Daugherty S.C."/>
            <person name="DeBoy R.T."/>
            <person name="Durkin S.A."/>
            <person name="Kolonay J.F."/>
            <person name="Madupu R."/>
            <person name="Nelson W.C."/>
            <person name="Vamathevan J.J."/>
            <person name="Tran B."/>
            <person name="Upton J."/>
            <person name="Hansen T."/>
            <person name="Shetty J."/>
            <person name="Khouri H.M."/>
            <person name="Utterback T.R."/>
            <person name="Radune D."/>
            <person name="Ketchum K.A."/>
            <person name="Dougherty B.A."/>
            <person name="Fraser C.M."/>
        </authorList>
    </citation>
    <scope>NUCLEOTIDE SEQUENCE [LARGE SCALE GENOMIC DNA]</scope>
    <source>
        <strain>ATCC 700802 / V583</strain>
    </source>
</reference>
<reference key="3">
    <citation type="journal article" date="1998" name="Proc. Natl. Acad. Sci. U.S.A.">
        <title>In vivo characterization of the type A and B vancomycin-resistant enterococci (VRE) VanRS two-component systems in Escherichia coli: a nonpathogenic model for studying the VRE signal transduction pathways.</title>
        <authorList>
            <person name="Silva J.C."/>
            <person name="Haldimann A."/>
            <person name="Prahalad M.K."/>
            <person name="Walsh C.T."/>
            <person name="Wanner B.L."/>
        </authorList>
    </citation>
    <scope>FUNCTION</scope>
</reference>
<reference key="4">
    <citation type="journal article" date="1999" name="Microbiology">
        <title>Regulated interactions between partner and non-partner sensors and response regulators that control glycopeptide resistance gene expression in enterococci.</title>
        <authorList>
            <person name="Arthur M."/>
            <person name="Depardieu F."/>
            <person name="Courvalin P."/>
        </authorList>
    </citation>
    <scope>FUNCTION</scope>
    <scope>CATALYTIC ACTIVITY</scope>
    <scope>MUTAGENESIS OF HIS-233</scope>
</reference>
<keyword id="KW-0046">Antibiotic resistance</keyword>
<keyword id="KW-0067">ATP-binding</keyword>
<keyword id="KW-1003">Cell membrane</keyword>
<keyword id="KW-0961">Cell wall biogenesis/degradation</keyword>
<keyword id="KW-0418">Kinase</keyword>
<keyword id="KW-0472">Membrane</keyword>
<keyword id="KW-0547">Nucleotide-binding</keyword>
<keyword id="KW-0597">Phosphoprotein</keyword>
<keyword id="KW-1185">Reference proteome</keyword>
<keyword id="KW-0808">Transferase</keyword>
<keyword id="KW-0812">Transmembrane</keyword>
<keyword id="KW-1133">Transmembrane helix</keyword>
<keyword id="KW-0902">Two-component regulatory system</keyword>
<feature type="chain" id="PRO_0000074892" description="Sensor protein VanSB">
    <location>
        <begin position="1"/>
        <end position="447"/>
    </location>
</feature>
<feature type="transmembrane region" description="Helical" evidence="1">
    <location>
        <begin position="10"/>
        <end position="30"/>
    </location>
</feature>
<feature type="transmembrane region" description="Helical" evidence="1">
    <location>
        <begin position="137"/>
        <end position="155"/>
    </location>
</feature>
<feature type="domain" description="HAMP" evidence="2">
    <location>
        <begin position="157"/>
        <end position="208"/>
    </location>
</feature>
<feature type="domain" description="Histidine kinase" evidence="3">
    <location>
        <begin position="230"/>
        <end position="445"/>
    </location>
</feature>
<feature type="modified residue" description="Phosphohistidine; by autocatalysis" evidence="3">
    <location>
        <position position="233"/>
    </location>
</feature>
<feature type="mutagenesis site" description="Probably retains phosphatase activity." evidence="4">
    <original>H</original>
    <variation>Q</variation>
    <location>
        <position position="233"/>
    </location>
</feature>
<name>VANS_ENTFA</name>
<accession>Q47745</accession>